<comment type="function">
    <text evidence="1">Forms part of the ribosomal stalk, playing a central role in the interaction of the ribosome with GTP-bound translation factors.</text>
</comment>
<comment type="subunit">
    <text evidence="1">Part of the ribosomal stalk of the 50S ribosomal subunit. The N-terminus interacts with L11 and the large rRNA to form the base of the stalk. The C-terminus forms an elongated spine to which L12 dimers bind in a sequential fashion forming a multimeric L10(L12)X complex.</text>
</comment>
<comment type="similarity">
    <text evidence="1">Belongs to the universal ribosomal protein uL10 family.</text>
</comment>
<organism>
    <name type="scientific">Tropheryma whipplei (strain TW08/27)</name>
    <name type="common">Whipple's bacillus</name>
    <dbReference type="NCBI Taxonomy" id="218496"/>
    <lineage>
        <taxon>Bacteria</taxon>
        <taxon>Bacillati</taxon>
        <taxon>Actinomycetota</taxon>
        <taxon>Actinomycetes</taxon>
        <taxon>Micrococcales</taxon>
        <taxon>Tropherymataceae</taxon>
        <taxon>Tropheryma</taxon>
    </lineage>
</organism>
<protein>
    <recommendedName>
        <fullName evidence="1">Large ribosomal subunit protein uL10</fullName>
    </recommendedName>
    <alternativeName>
        <fullName evidence="2">50S ribosomal protein L10</fullName>
    </alternativeName>
</protein>
<keyword id="KW-0687">Ribonucleoprotein</keyword>
<keyword id="KW-0689">Ribosomal protein</keyword>
<keyword id="KW-0694">RNA-binding</keyword>
<keyword id="KW-0699">rRNA-binding</keyword>
<sequence length="166" mass="17723">MTKQETVKHLVGVLSDAQAIVFTEYRGLSAAQLRALRILLRGDASYLIAKNTLARIAAQQVGFNDFAEFLRGPTAIVAVDGDIVSVAKSLRKFAETDGLLKIKGCFVDGQVFGSEHVKRLAELESREVILAKIASVTKGALSSALGLVSAPLSSAARVFVAMKNTF</sequence>
<gene>
    <name evidence="1" type="primary">rplJ</name>
    <name type="ordered locus">TW729</name>
</gene>
<accession>Q83HB1</accession>
<feature type="chain" id="PRO_0000154740" description="Large ribosomal subunit protein uL10">
    <location>
        <begin position="1"/>
        <end position="166"/>
    </location>
</feature>
<reference key="1">
    <citation type="journal article" date="2003" name="Lancet">
        <title>Sequencing and analysis of the genome of the Whipple's disease bacterium Tropheryma whipplei.</title>
        <authorList>
            <person name="Bentley S.D."/>
            <person name="Maiwald M."/>
            <person name="Murphy L.D."/>
            <person name="Pallen M.J."/>
            <person name="Yeats C.A."/>
            <person name="Dover L.G."/>
            <person name="Norbertczak H.T."/>
            <person name="Besra G.S."/>
            <person name="Quail M.A."/>
            <person name="Harris D.E."/>
            <person name="von Herbay A."/>
            <person name="Goble A."/>
            <person name="Rutter S."/>
            <person name="Squares R."/>
            <person name="Squares S."/>
            <person name="Barrell B.G."/>
            <person name="Parkhill J."/>
            <person name="Relman D.A."/>
        </authorList>
    </citation>
    <scope>NUCLEOTIDE SEQUENCE [LARGE SCALE GENOMIC DNA]</scope>
    <source>
        <strain>TW08/27</strain>
    </source>
</reference>
<proteinExistence type="inferred from homology"/>
<name>RL10_TROW8</name>
<evidence type="ECO:0000255" key="1">
    <source>
        <dbReference type="HAMAP-Rule" id="MF_00362"/>
    </source>
</evidence>
<evidence type="ECO:0000305" key="2"/>
<dbReference type="EMBL" id="BX251412">
    <property type="protein sequence ID" value="CAD67388.1"/>
    <property type="molecule type" value="Genomic_DNA"/>
</dbReference>
<dbReference type="RefSeq" id="WP_011096666.1">
    <property type="nucleotide sequence ID" value="NC_004551.1"/>
</dbReference>
<dbReference type="SMR" id="Q83HB1"/>
<dbReference type="GeneID" id="67388506"/>
<dbReference type="KEGG" id="tws:TW729"/>
<dbReference type="HOGENOM" id="CLU_092227_1_0_11"/>
<dbReference type="GO" id="GO:0015934">
    <property type="term" value="C:large ribosomal subunit"/>
    <property type="evidence" value="ECO:0007669"/>
    <property type="project" value="InterPro"/>
</dbReference>
<dbReference type="GO" id="GO:0070180">
    <property type="term" value="F:large ribosomal subunit rRNA binding"/>
    <property type="evidence" value="ECO:0007669"/>
    <property type="project" value="UniProtKB-UniRule"/>
</dbReference>
<dbReference type="GO" id="GO:0003735">
    <property type="term" value="F:structural constituent of ribosome"/>
    <property type="evidence" value="ECO:0007669"/>
    <property type="project" value="InterPro"/>
</dbReference>
<dbReference type="GO" id="GO:0006412">
    <property type="term" value="P:translation"/>
    <property type="evidence" value="ECO:0007669"/>
    <property type="project" value="UniProtKB-UniRule"/>
</dbReference>
<dbReference type="CDD" id="cd05797">
    <property type="entry name" value="Ribosomal_L10"/>
    <property type="match status" value="1"/>
</dbReference>
<dbReference type="Gene3D" id="3.30.70.1730">
    <property type="match status" value="1"/>
</dbReference>
<dbReference type="HAMAP" id="MF_00362">
    <property type="entry name" value="Ribosomal_uL10"/>
    <property type="match status" value="1"/>
</dbReference>
<dbReference type="InterPro" id="IPR001790">
    <property type="entry name" value="Ribosomal_uL10"/>
</dbReference>
<dbReference type="InterPro" id="IPR043141">
    <property type="entry name" value="Ribosomal_uL10-like_sf"/>
</dbReference>
<dbReference type="InterPro" id="IPR022973">
    <property type="entry name" value="Ribosomal_uL10_bac"/>
</dbReference>
<dbReference type="InterPro" id="IPR047865">
    <property type="entry name" value="Ribosomal_uL10_bac_type"/>
</dbReference>
<dbReference type="InterPro" id="IPR002363">
    <property type="entry name" value="Ribosomal_uL10_CS_bac"/>
</dbReference>
<dbReference type="NCBIfam" id="NF000955">
    <property type="entry name" value="PRK00099.1-1"/>
    <property type="match status" value="1"/>
</dbReference>
<dbReference type="PANTHER" id="PTHR11560">
    <property type="entry name" value="39S RIBOSOMAL PROTEIN L10, MITOCHONDRIAL"/>
    <property type="match status" value="1"/>
</dbReference>
<dbReference type="Pfam" id="PF00466">
    <property type="entry name" value="Ribosomal_L10"/>
    <property type="match status" value="1"/>
</dbReference>
<dbReference type="SUPFAM" id="SSF160369">
    <property type="entry name" value="Ribosomal protein L10-like"/>
    <property type="match status" value="1"/>
</dbReference>
<dbReference type="PROSITE" id="PS01109">
    <property type="entry name" value="RIBOSOMAL_L10"/>
    <property type="match status" value="1"/>
</dbReference>